<reference key="1">
    <citation type="journal article" date="1995" name="Science">
        <title>Whole-genome random sequencing and assembly of Haemophilus influenzae Rd.</title>
        <authorList>
            <person name="Fleischmann R.D."/>
            <person name="Adams M.D."/>
            <person name="White O."/>
            <person name="Clayton R.A."/>
            <person name="Kirkness E.F."/>
            <person name="Kerlavage A.R."/>
            <person name="Bult C.J."/>
            <person name="Tomb J.-F."/>
            <person name="Dougherty B.A."/>
            <person name="Merrick J.M."/>
            <person name="McKenney K."/>
            <person name="Sutton G.G."/>
            <person name="FitzHugh W."/>
            <person name="Fields C.A."/>
            <person name="Gocayne J.D."/>
            <person name="Scott J.D."/>
            <person name="Shirley R."/>
            <person name="Liu L.-I."/>
            <person name="Glodek A."/>
            <person name="Kelley J.M."/>
            <person name="Weidman J.F."/>
            <person name="Phillips C.A."/>
            <person name="Spriggs T."/>
            <person name="Hedblom E."/>
            <person name="Cotton M.D."/>
            <person name="Utterback T.R."/>
            <person name="Hanna M.C."/>
            <person name="Nguyen D.T."/>
            <person name="Saudek D.M."/>
            <person name="Brandon R.C."/>
            <person name="Fine L.D."/>
            <person name="Fritchman J.L."/>
            <person name="Fuhrmann J.L."/>
            <person name="Geoghagen N.S.M."/>
            <person name="Gnehm C.L."/>
            <person name="McDonald L.A."/>
            <person name="Small K.V."/>
            <person name="Fraser C.M."/>
            <person name="Smith H.O."/>
            <person name="Venter J.C."/>
        </authorList>
    </citation>
    <scope>NUCLEOTIDE SEQUENCE [LARGE SCALE GENOMIC DNA]</scope>
    <source>
        <strain>ATCC 51907 / DSM 11121 / KW20 / Rd</strain>
    </source>
</reference>
<keyword id="KW-1003">Cell membrane</keyword>
<keyword id="KW-0472">Membrane</keyword>
<keyword id="KW-1185">Reference proteome</keyword>
<keyword id="KW-0812">Transmembrane</keyword>
<keyword id="KW-1133">Transmembrane helix</keyword>
<gene>
    <name type="ordered locus">HI_1073</name>
</gene>
<evidence type="ECO:0000255" key="1"/>
<evidence type="ECO:0000305" key="2"/>
<dbReference type="EMBL" id="L42023">
    <property type="protein sequence ID" value="AAC22729.1"/>
    <property type="molecule type" value="Genomic_DNA"/>
</dbReference>
<dbReference type="PIR" id="H64165">
    <property type="entry name" value="H64165"/>
</dbReference>
<dbReference type="RefSeq" id="NP_439229.1">
    <property type="nucleotide sequence ID" value="NC_000907.1"/>
</dbReference>
<dbReference type="STRING" id="71421.HI_1073"/>
<dbReference type="DNASU" id="950051"/>
<dbReference type="EnsemblBacteria" id="AAC22729">
    <property type="protein sequence ID" value="AAC22729"/>
    <property type="gene ID" value="HI_1073"/>
</dbReference>
<dbReference type="KEGG" id="hin:HI_1073"/>
<dbReference type="PATRIC" id="fig|71421.8.peg.1115"/>
<dbReference type="eggNOG" id="COG2363">
    <property type="taxonomic scope" value="Bacteria"/>
</dbReference>
<dbReference type="HOGENOM" id="CLU_096548_3_2_6"/>
<dbReference type="OrthoDB" id="9802121at2"/>
<dbReference type="PhylomeDB" id="P45019"/>
<dbReference type="BioCyc" id="HINF71421:G1GJ1-1107-MONOMER"/>
<dbReference type="Proteomes" id="UP000000579">
    <property type="component" value="Chromosome"/>
</dbReference>
<dbReference type="GO" id="GO:0005886">
    <property type="term" value="C:plasma membrane"/>
    <property type="evidence" value="ECO:0000318"/>
    <property type="project" value="GO_Central"/>
</dbReference>
<dbReference type="InterPro" id="IPR006696">
    <property type="entry name" value="DUF423"/>
</dbReference>
<dbReference type="PANTHER" id="PTHR43461">
    <property type="entry name" value="TRANSMEMBRANE PROTEIN 256"/>
    <property type="match status" value="1"/>
</dbReference>
<dbReference type="PANTHER" id="PTHR43461:SF1">
    <property type="entry name" value="TRANSMEMBRANE PROTEIN 256"/>
    <property type="match status" value="1"/>
</dbReference>
<dbReference type="Pfam" id="PF04241">
    <property type="entry name" value="DUF423"/>
    <property type="match status" value="1"/>
</dbReference>
<name>Y1073_HAEIN</name>
<organism>
    <name type="scientific">Haemophilus influenzae (strain ATCC 51907 / DSM 11121 / KW20 / Rd)</name>
    <dbReference type="NCBI Taxonomy" id="71421"/>
    <lineage>
        <taxon>Bacteria</taxon>
        <taxon>Pseudomonadati</taxon>
        <taxon>Pseudomonadota</taxon>
        <taxon>Gammaproteobacteria</taxon>
        <taxon>Pasteurellales</taxon>
        <taxon>Pasteurellaceae</taxon>
        <taxon>Haemophilus</taxon>
    </lineage>
</organism>
<feature type="chain" id="PRO_0000169333" description="UPF0382 membrane protein HI_1073">
    <location>
        <begin position="1"/>
        <end position="124"/>
    </location>
</feature>
<feature type="transmembrane region" description="Helical" evidence="1">
    <location>
        <begin position="6"/>
        <end position="26"/>
    </location>
</feature>
<feature type="transmembrane region" description="Helical" evidence="1">
    <location>
        <begin position="70"/>
        <end position="90"/>
    </location>
</feature>
<feature type="transmembrane region" description="Helical" evidence="1">
    <location>
        <begin position="95"/>
        <end position="115"/>
    </location>
</feature>
<sequence length="124" mass="13450">MKNKYLTLVALSGFFCVALGAFAAHGLSHILEAKALSWIDTGLEYQMFHTIAVLAVALSALRDNKFARLSMSSWLIGILLFSGSLYALAFEASNVIVWITPIGGTLFLIGWISLAYGSFKSKSL</sequence>
<proteinExistence type="inferred from homology"/>
<protein>
    <recommendedName>
        <fullName>UPF0382 membrane protein HI_1073</fullName>
    </recommendedName>
</protein>
<comment type="subcellular location">
    <subcellularLocation>
        <location evidence="2">Cell membrane</location>
        <topology evidence="2">Multi-pass membrane protein</topology>
    </subcellularLocation>
</comment>
<comment type="similarity">
    <text evidence="2">Belongs to the UPF0382 family.</text>
</comment>
<accession>P45019</accession>